<name>YC55L_SYNY3</name>
<proteinExistence type="inferred from homology"/>
<evidence type="ECO:0000255" key="1">
    <source>
        <dbReference type="PROSITE-ProRule" id="PRU00169"/>
    </source>
</evidence>
<evidence type="ECO:0000305" key="2"/>
<accession>P74126</accession>
<gene>
    <name type="ordered locus">sll1879</name>
</gene>
<protein>
    <recommendedName>
        <fullName>Ycf55-like protein</fullName>
    </recommendedName>
</protein>
<comment type="similarity">
    <text evidence="2">Belongs to the ycf55 family.</text>
</comment>
<feature type="chain" id="PRO_0000217390" description="Ycf55-like protein">
    <location>
        <begin position="1"/>
        <end position="562"/>
    </location>
</feature>
<feature type="domain" description="Response regulatory" evidence="1">
    <location>
        <begin position="7"/>
        <end position="125"/>
    </location>
</feature>
<reference key="1">
    <citation type="journal article" date="1996" name="DNA Res.">
        <title>Sequence analysis of the genome of the unicellular cyanobacterium Synechocystis sp. strain PCC6803. II. Sequence determination of the entire genome and assignment of potential protein-coding regions.</title>
        <authorList>
            <person name="Kaneko T."/>
            <person name="Sato S."/>
            <person name="Kotani H."/>
            <person name="Tanaka A."/>
            <person name="Asamizu E."/>
            <person name="Nakamura Y."/>
            <person name="Miyajima N."/>
            <person name="Hirosawa M."/>
            <person name="Sugiura M."/>
            <person name="Sasamoto S."/>
            <person name="Kimura T."/>
            <person name="Hosouchi T."/>
            <person name="Matsuno A."/>
            <person name="Muraki A."/>
            <person name="Nakazaki N."/>
            <person name="Naruo K."/>
            <person name="Okumura S."/>
            <person name="Shimpo S."/>
            <person name="Takeuchi C."/>
            <person name="Wada T."/>
            <person name="Watanabe A."/>
            <person name="Yamada M."/>
            <person name="Yasuda M."/>
            <person name="Tabata S."/>
        </authorList>
    </citation>
    <scope>NUCLEOTIDE SEQUENCE [LARGE SCALE GENOMIC DNA]</scope>
    <source>
        <strain>ATCC 27184 / PCC 6803 / Kazusa</strain>
    </source>
</reference>
<organism>
    <name type="scientific">Synechocystis sp. (strain ATCC 27184 / PCC 6803 / Kazusa)</name>
    <dbReference type="NCBI Taxonomy" id="1111708"/>
    <lineage>
        <taxon>Bacteria</taxon>
        <taxon>Bacillati</taxon>
        <taxon>Cyanobacteriota</taxon>
        <taxon>Cyanophyceae</taxon>
        <taxon>Synechococcales</taxon>
        <taxon>Merismopediaceae</taxon>
        <taxon>Synechocystis</taxon>
    </lineage>
</organism>
<sequence length="562" mass="63807">MSESPLTIVIVDEDPVFRLGLITVLGRETGVQVLGEGETLDDLRQQLETLAPSILLIDPQFPRRSQSAWPLLRQLSSAYPQVKICLLTASLEYDQLLAAKTQGIAAYFPKGTAIADLVTGLKQVHFGQTCWPSLQTVNAPPLSLWEKLIWPLFRDGLGQIEQSLQQVQKSLQVPSLSDFDRLFWRGRERELKFAQWLVRNLLPQRLKTWHKATNILTATTTVLPPSPPSPRRSGVRTITLRPPSNLTALGQILQQMPLQVENLTAIPLELDILQPLKRQELLSLGQQQLETTINELKALRITPAQLPENCLSIVAEMWRSLSLTFFGKYCQPKSEFSLEQIQSLLEVYQPIICREKLVKIPFVVPLFHHLLFGEPLVVNQKAYPLGSTEAQQYSDLYAQNLVIQLANSTMVFILNYFADHEAIKLALYEYSMLSSRQVARFRNDLAWYYQFSRYWLNPKQIFESQHTLLYLTPAGIVTTQVYAPRQQELTQLRAVPWFVTIVLECRDALSPRVRSVIEFVGNGLVFLLTQVVGRAIGLVGKGIIQGIGNTWQESRSQQKRSN</sequence>
<keyword id="KW-1185">Reference proteome</keyword>
<dbReference type="EMBL" id="BA000022">
    <property type="protein sequence ID" value="BAA18212.1"/>
    <property type="molecule type" value="Genomic_DNA"/>
</dbReference>
<dbReference type="PIR" id="S75651">
    <property type="entry name" value="S75651"/>
</dbReference>
<dbReference type="SMR" id="P74126"/>
<dbReference type="DIP" id="DIP-48808N"/>
<dbReference type="IntAct" id="P74126">
    <property type="interactions" value="4"/>
</dbReference>
<dbReference type="STRING" id="1148.gene:10499085"/>
<dbReference type="PaxDb" id="1148-1653297"/>
<dbReference type="EnsemblBacteria" id="BAA18212">
    <property type="protein sequence ID" value="BAA18212"/>
    <property type="gene ID" value="BAA18212"/>
</dbReference>
<dbReference type="KEGG" id="syn:sll1879"/>
<dbReference type="eggNOG" id="COG2197">
    <property type="taxonomic scope" value="Bacteria"/>
</dbReference>
<dbReference type="InParanoid" id="P74126"/>
<dbReference type="Proteomes" id="UP000001425">
    <property type="component" value="Chromosome"/>
</dbReference>
<dbReference type="GO" id="GO:0000160">
    <property type="term" value="P:phosphorelay signal transduction system"/>
    <property type="evidence" value="ECO:0007669"/>
    <property type="project" value="InterPro"/>
</dbReference>
<dbReference type="CDD" id="cd17535">
    <property type="entry name" value="REC_NarL-like"/>
    <property type="match status" value="1"/>
</dbReference>
<dbReference type="Gene3D" id="3.40.50.2300">
    <property type="match status" value="1"/>
</dbReference>
<dbReference type="InterPro" id="IPR011006">
    <property type="entry name" value="CheY-like_superfamily"/>
</dbReference>
<dbReference type="InterPro" id="IPR051015">
    <property type="entry name" value="RcsB_transcriptional_reg"/>
</dbReference>
<dbReference type="InterPro" id="IPR001789">
    <property type="entry name" value="Sig_transdc_resp-reg_receiver"/>
</dbReference>
<dbReference type="InterPro" id="IPR016837">
    <property type="entry name" value="Uncharacterised_Ycf55_cyanobac"/>
</dbReference>
<dbReference type="InterPro" id="IPR022552">
    <property type="entry name" value="UPF_Ycf55"/>
</dbReference>
<dbReference type="PANTHER" id="PTHR45566">
    <property type="entry name" value="HTH-TYPE TRANSCRIPTIONAL REGULATOR YHJB-RELATED"/>
    <property type="match status" value="1"/>
</dbReference>
<dbReference type="PANTHER" id="PTHR45566:SF1">
    <property type="entry name" value="HTH-TYPE TRANSCRIPTIONAL REGULATOR YHJB-RELATED"/>
    <property type="match status" value="1"/>
</dbReference>
<dbReference type="Pfam" id="PF12452">
    <property type="entry name" value="DUF3685"/>
    <property type="match status" value="1"/>
</dbReference>
<dbReference type="Pfam" id="PF00072">
    <property type="entry name" value="Response_reg"/>
    <property type="match status" value="1"/>
</dbReference>
<dbReference type="PIRSF" id="PIRSF026434">
    <property type="entry name" value="RR_ycf55_prd"/>
    <property type="match status" value="1"/>
</dbReference>
<dbReference type="SMART" id="SM00448">
    <property type="entry name" value="REC"/>
    <property type="match status" value="1"/>
</dbReference>
<dbReference type="SUPFAM" id="SSF52172">
    <property type="entry name" value="CheY-like"/>
    <property type="match status" value="1"/>
</dbReference>
<dbReference type="PROSITE" id="PS50110">
    <property type="entry name" value="RESPONSE_REGULATORY"/>
    <property type="match status" value="1"/>
</dbReference>